<accession>Q52106</accession>
<name>MERT_ACICA</name>
<comment type="function">
    <text evidence="1">Involved in mercury resistance. Probably transfers a mercuric ion from the periplasmic Hg(2+)-binding protein MerP to the cytoplasmic mercuric reductase MerA.</text>
</comment>
<comment type="subcellular location">
    <subcellularLocation>
        <location evidence="4">Cell inner membrane</location>
        <topology evidence="2">Multi-pass membrane protein</topology>
    </subcellularLocation>
</comment>
<comment type="similarity">
    <text evidence="4">Belongs to the MerT family.</text>
</comment>
<dbReference type="EMBL" id="AF213017">
    <property type="protein sequence ID" value="AAA19679.1"/>
    <property type="molecule type" value="Genomic_DNA"/>
</dbReference>
<dbReference type="RefSeq" id="WP_001294659.1">
    <property type="nucleotide sequence ID" value="NZ_MOSW01000200.1"/>
</dbReference>
<dbReference type="GeneID" id="92893128"/>
<dbReference type="GO" id="GO:0005886">
    <property type="term" value="C:plasma membrane"/>
    <property type="evidence" value="ECO:0007669"/>
    <property type="project" value="UniProtKB-SubCell"/>
</dbReference>
<dbReference type="GO" id="GO:0015097">
    <property type="term" value="F:mercury ion transmembrane transporter activity"/>
    <property type="evidence" value="ECO:0007669"/>
    <property type="project" value="InterPro"/>
</dbReference>
<dbReference type="GO" id="GO:0046872">
    <property type="term" value="F:metal ion binding"/>
    <property type="evidence" value="ECO:0007669"/>
    <property type="project" value="UniProtKB-KW"/>
</dbReference>
<dbReference type="Gene3D" id="1.10.287.910">
    <property type="entry name" value="bacterial mercury transporter, merf"/>
    <property type="match status" value="1"/>
</dbReference>
<dbReference type="InterPro" id="IPR003457">
    <property type="entry name" value="Transprt_MerT"/>
</dbReference>
<dbReference type="NCBIfam" id="NF010314">
    <property type="entry name" value="PRK13751.2"/>
    <property type="match status" value="1"/>
</dbReference>
<dbReference type="Pfam" id="PF02411">
    <property type="entry name" value="MerT"/>
    <property type="match status" value="1"/>
</dbReference>
<organism>
    <name type="scientific">Acinetobacter calcoaceticus</name>
    <dbReference type="NCBI Taxonomy" id="471"/>
    <lineage>
        <taxon>Bacteria</taxon>
        <taxon>Pseudomonadati</taxon>
        <taxon>Pseudomonadota</taxon>
        <taxon>Gammaproteobacteria</taxon>
        <taxon>Moraxellales</taxon>
        <taxon>Moraxellaceae</taxon>
        <taxon>Acinetobacter</taxon>
        <taxon>Acinetobacter calcoaceticus/baumannii complex</taxon>
    </lineage>
</organism>
<evidence type="ECO:0000250" key="1">
    <source>
        <dbReference type="UniProtKB" id="P04140"/>
    </source>
</evidence>
<evidence type="ECO:0000255" key="2"/>
<evidence type="ECO:0000303" key="3">
    <source>
    </source>
</evidence>
<evidence type="ECO:0000305" key="4"/>
<feature type="chain" id="PRO_0000096427" description="Mercuric transport protein MerT">
    <location>
        <begin position="1"/>
        <end position="116"/>
    </location>
</feature>
<feature type="transmembrane region" description="Helical" evidence="2">
    <location>
        <begin position="16"/>
        <end position="36"/>
    </location>
</feature>
<feature type="transmembrane region" description="Helical" evidence="2">
    <location>
        <begin position="46"/>
        <end position="66"/>
    </location>
</feature>
<feature type="transmembrane region" description="Helical" evidence="2">
    <location>
        <begin position="94"/>
        <end position="114"/>
    </location>
</feature>
<feature type="binding site" evidence="1">
    <location>
        <position position="24"/>
    </location>
    <ligand>
        <name>Hg(2+)</name>
        <dbReference type="ChEBI" id="CHEBI:16793"/>
    </ligand>
</feature>
<feature type="binding site" evidence="1">
    <location>
        <position position="25"/>
    </location>
    <ligand>
        <name>Hg(2+)</name>
        <dbReference type="ChEBI" id="CHEBI:16793"/>
    </ligand>
</feature>
<feature type="binding site" evidence="1">
    <location>
        <position position="76"/>
    </location>
    <ligand>
        <name>Hg(2+)</name>
        <dbReference type="ChEBI" id="CHEBI:16793"/>
    </ligand>
</feature>
<feature type="binding site" evidence="1">
    <location>
        <position position="82"/>
    </location>
    <ligand>
        <name>Hg(2+)</name>
        <dbReference type="ChEBI" id="CHEBI:16793"/>
    </ligand>
</feature>
<geneLocation type="plasmid">
    <name>pKLH2</name>
</geneLocation>
<gene>
    <name evidence="3" type="primary">merT</name>
</gene>
<reference key="1">
    <citation type="journal article" date="1993" name="Plasmid">
        <title>Molecular characterization of an aberrant mercury resistance transposable element from an environmental Acinetobacter strain.</title>
        <authorList>
            <person name="Kholodii G.Y."/>
            <person name="Lomovskaya O.L."/>
            <person name="Gorlenko Z.M."/>
            <person name="Mindlin S.Z."/>
            <person name="Yurieva O.V."/>
            <person name="Nikiforov V.G."/>
        </authorList>
    </citation>
    <scope>NUCLEOTIDE SEQUENCE [GENOMIC DNA]</scope>
</reference>
<proteinExistence type="inferred from homology"/>
<keyword id="KW-0997">Cell inner membrane</keyword>
<keyword id="KW-1003">Cell membrane</keyword>
<keyword id="KW-0472">Membrane</keyword>
<keyword id="KW-0475">Mercuric resistance</keyword>
<keyword id="KW-0476">Mercury</keyword>
<keyword id="KW-0479">Metal-binding</keyword>
<keyword id="KW-0614">Plasmid</keyword>
<keyword id="KW-0812">Transmembrane</keyword>
<keyword id="KW-1133">Transmembrane helix</keyword>
<keyword id="KW-0813">Transport</keyword>
<protein>
    <recommendedName>
        <fullName evidence="1">Mercuric transport protein MerT</fullName>
    </recommendedName>
    <alternativeName>
        <fullName evidence="1">Mercury ion transport protein</fullName>
    </alternativeName>
</protein>
<sequence>MSEPQNGRGALFAGGLAAILASACCLGPLVLIALGFSGAWIGNLTVLEPYRPIFIGAALVALFFAWRRIVRPTAACKPGEVCAIPQVRTTYKLIFWFVAVLVLVALGFPYVMPFFY</sequence>